<protein>
    <recommendedName>
        <fullName>Uncharacterized protein TP_0214</fullName>
    </recommendedName>
</protein>
<sequence length="65" mass="7005">MSKAHRGKGIRGMVGRGRGVCPVTGQTGVKLLYECEIDGKKVKVSKVGRATLQNRKRRLDAQPGA</sequence>
<gene>
    <name type="ordered locus">TP_0214</name>
</gene>
<organism>
    <name type="scientific">Treponema pallidum (strain Nichols)</name>
    <dbReference type="NCBI Taxonomy" id="243276"/>
    <lineage>
        <taxon>Bacteria</taxon>
        <taxon>Pseudomonadati</taxon>
        <taxon>Spirochaetota</taxon>
        <taxon>Spirochaetia</taxon>
        <taxon>Spirochaetales</taxon>
        <taxon>Treponemataceae</taxon>
        <taxon>Treponema</taxon>
    </lineage>
</organism>
<reference key="1">
    <citation type="journal article" date="1998" name="Science">
        <title>Complete genome sequence of Treponema pallidum, the syphilis spirochete.</title>
        <authorList>
            <person name="Fraser C.M."/>
            <person name="Norris S.J."/>
            <person name="Weinstock G.M."/>
            <person name="White O."/>
            <person name="Sutton G.G."/>
            <person name="Dodson R.J."/>
            <person name="Gwinn M.L."/>
            <person name="Hickey E.K."/>
            <person name="Clayton R.A."/>
            <person name="Ketchum K.A."/>
            <person name="Sodergren E."/>
            <person name="Hardham J.M."/>
            <person name="McLeod M.P."/>
            <person name="Salzberg S.L."/>
            <person name="Peterson J.D."/>
            <person name="Khalak H.G."/>
            <person name="Richardson D.L."/>
            <person name="Howell J.K."/>
            <person name="Chidambaram M."/>
            <person name="Utterback T.R."/>
            <person name="McDonald L.A."/>
            <person name="Artiach P."/>
            <person name="Bowman C."/>
            <person name="Cotton M.D."/>
            <person name="Fujii C."/>
            <person name="Garland S.A."/>
            <person name="Hatch B."/>
            <person name="Horst K."/>
            <person name="Roberts K.M."/>
            <person name="Sandusky M."/>
            <person name="Weidman J.F."/>
            <person name="Smith H.O."/>
            <person name="Venter J.C."/>
        </authorList>
    </citation>
    <scope>NUCLEOTIDE SEQUENCE [LARGE SCALE GENOMIC DNA]</scope>
    <source>
        <strain>Nichols</strain>
    </source>
</reference>
<name>Y214_TREPA</name>
<proteinExistence type="predicted"/>
<keyword id="KW-1185">Reference proteome</keyword>
<accession>O83244</accession>
<dbReference type="EMBL" id="AE000520">
    <property type="protein sequence ID" value="AAC65210.1"/>
    <property type="molecule type" value="Genomic_DNA"/>
</dbReference>
<dbReference type="PIR" id="D71352">
    <property type="entry name" value="D71352"/>
</dbReference>
<dbReference type="RefSeq" id="WP_010881662.1">
    <property type="nucleotide sequence ID" value="NC_021490.2"/>
</dbReference>
<dbReference type="IntAct" id="O83244">
    <property type="interactions" value="4"/>
</dbReference>
<dbReference type="STRING" id="243276.TP_0214"/>
<dbReference type="EnsemblBacteria" id="AAC65210">
    <property type="protein sequence ID" value="AAC65210"/>
    <property type="gene ID" value="TP_0214"/>
</dbReference>
<dbReference type="KEGG" id="tpa:TP_0214"/>
<dbReference type="KEGG" id="tpw:TPANIC_0214"/>
<dbReference type="eggNOG" id="ENOG5033FN4">
    <property type="taxonomic scope" value="Bacteria"/>
</dbReference>
<dbReference type="HOGENOM" id="CLU_194677_0_0_12"/>
<dbReference type="OrthoDB" id="2928696at2"/>
<dbReference type="Proteomes" id="UP000000811">
    <property type="component" value="Chromosome"/>
</dbReference>
<feature type="chain" id="PRO_0000202213" description="Uncharacterized protein TP_0214">
    <location>
        <begin position="1"/>
        <end position="65"/>
    </location>
</feature>